<feature type="chain" id="PRO_1000012753" description="ATP-dependent protease ATPase subunit HslU">
    <location>
        <begin position="1"/>
        <end position="464"/>
    </location>
</feature>
<feature type="binding site" evidence="1">
    <location>
        <position position="18"/>
    </location>
    <ligand>
        <name>ATP</name>
        <dbReference type="ChEBI" id="CHEBI:30616"/>
    </ligand>
</feature>
<feature type="binding site" evidence="1">
    <location>
        <begin position="60"/>
        <end position="65"/>
    </location>
    <ligand>
        <name>ATP</name>
        <dbReference type="ChEBI" id="CHEBI:30616"/>
    </ligand>
</feature>
<feature type="binding site" evidence="1">
    <location>
        <position position="277"/>
    </location>
    <ligand>
        <name>ATP</name>
        <dbReference type="ChEBI" id="CHEBI:30616"/>
    </ligand>
</feature>
<feature type="binding site" evidence="1">
    <location>
        <position position="342"/>
    </location>
    <ligand>
        <name>ATP</name>
        <dbReference type="ChEBI" id="CHEBI:30616"/>
    </ligand>
</feature>
<feature type="binding site" evidence="1">
    <location>
        <position position="414"/>
    </location>
    <ligand>
        <name>ATP</name>
        <dbReference type="ChEBI" id="CHEBI:30616"/>
    </ligand>
</feature>
<keyword id="KW-0067">ATP-binding</keyword>
<keyword id="KW-0143">Chaperone</keyword>
<keyword id="KW-0963">Cytoplasm</keyword>
<keyword id="KW-0547">Nucleotide-binding</keyword>
<keyword id="KW-1185">Reference proteome</keyword>
<evidence type="ECO:0000255" key="1">
    <source>
        <dbReference type="HAMAP-Rule" id="MF_00249"/>
    </source>
</evidence>
<protein>
    <recommendedName>
        <fullName evidence="1">ATP-dependent protease ATPase subunit HslU</fullName>
    </recommendedName>
    <alternativeName>
        <fullName evidence="1">Unfoldase HslU</fullName>
    </alternativeName>
</protein>
<comment type="function">
    <text evidence="1">ATPase subunit of a proteasome-like degradation complex; this subunit has chaperone activity. The binding of ATP and its subsequent hydrolysis by HslU are essential for unfolding of protein substrates subsequently hydrolyzed by HslV. HslU recognizes the N-terminal part of its protein substrates and unfolds these before they are guided to HslV for hydrolysis.</text>
</comment>
<comment type="subunit">
    <text evidence="1">A double ring-shaped homohexamer of HslV is capped on each side by a ring-shaped HslU homohexamer. The assembly of the HslU/HslV complex is dependent on binding of ATP.</text>
</comment>
<comment type="subcellular location">
    <subcellularLocation>
        <location evidence="1">Cytoplasm</location>
    </subcellularLocation>
</comment>
<comment type="similarity">
    <text evidence="1">Belongs to the ClpX chaperone family. HslU subfamily.</text>
</comment>
<accession>Q1G9V4</accession>
<organism>
    <name type="scientific">Lactobacillus delbrueckii subsp. bulgaricus (strain ATCC 11842 / DSM 20081 / BCRC 10696 / JCM 1002 / NBRC 13953 / NCIMB 11778 / NCTC 12712 / WDCM 00102 / Lb 14)</name>
    <dbReference type="NCBI Taxonomy" id="390333"/>
    <lineage>
        <taxon>Bacteria</taxon>
        <taxon>Bacillati</taxon>
        <taxon>Bacillota</taxon>
        <taxon>Bacilli</taxon>
        <taxon>Lactobacillales</taxon>
        <taxon>Lactobacillaceae</taxon>
        <taxon>Lactobacillus</taxon>
    </lineage>
</organism>
<sequence length="464" mass="51938">MREKTPKQIVDLLDKYIVGQNEAKKSVAIALYNRYRRTQLPEDVQKDITPKNILMAGPTGVGKTEIARRLADIVDAPFVKVEATKFTEVGYVGRDVESMVRDLANEAVRIVEKEEFVKVESQAIRQANKTLVRLLVPGVKRNNRQNQMQQMQEMMQSLLAGGGMPEETEEVTDEIRNQRLSVAEKLDRGLLENEEVTIEVEQAPKANPMGDMMGQMGMDMSSMLGDMLPKKKVKRTLPVGQARKLLVQEEEKKLVNYDDIYQKAMDRAGQSGIIFIDEIDKITAADKRNSAGVSREGVQRDILPIVEGSTVSTKYGPLSTDHILFIAAGAFAESKPSDLIPELQGRFPIRVELNALTKDDFVRILKDPQNSLLKQYIALLKADGVDLVFTAEAVDKIAEIAFEVNQGTDNIGARRLATILEKLLEEVLYEGPDMEMGQITITQAYVEQKLSDIVKNKDLTKFIL</sequence>
<dbReference type="EMBL" id="CR954253">
    <property type="protein sequence ID" value="CAI98070.1"/>
    <property type="molecule type" value="Genomic_DNA"/>
</dbReference>
<dbReference type="RefSeq" id="WP_011543971.1">
    <property type="nucleotide sequence ID" value="NC_008054.1"/>
</dbReference>
<dbReference type="SMR" id="Q1G9V4"/>
<dbReference type="STRING" id="390333.Ldb1269"/>
<dbReference type="KEGG" id="ldb:Ldb1269"/>
<dbReference type="PATRIC" id="fig|390333.13.peg.1638"/>
<dbReference type="eggNOG" id="COG1220">
    <property type="taxonomic scope" value="Bacteria"/>
</dbReference>
<dbReference type="HOGENOM" id="CLU_033123_0_0_9"/>
<dbReference type="BioCyc" id="LDEL390333:LDB_RS05410-MONOMER"/>
<dbReference type="Proteomes" id="UP000001259">
    <property type="component" value="Chromosome"/>
</dbReference>
<dbReference type="GO" id="GO:0009376">
    <property type="term" value="C:HslUV protease complex"/>
    <property type="evidence" value="ECO:0007669"/>
    <property type="project" value="UniProtKB-UniRule"/>
</dbReference>
<dbReference type="GO" id="GO:0005524">
    <property type="term" value="F:ATP binding"/>
    <property type="evidence" value="ECO:0007669"/>
    <property type="project" value="UniProtKB-UniRule"/>
</dbReference>
<dbReference type="GO" id="GO:0016887">
    <property type="term" value="F:ATP hydrolysis activity"/>
    <property type="evidence" value="ECO:0007669"/>
    <property type="project" value="InterPro"/>
</dbReference>
<dbReference type="GO" id="GO:0008233">
    <property type="term" value="F:peptidase activity"/>
    <property type="evidence" value="ECO:0007669"/>
    <property type="project" value="InterPro"/>
</dbReference>
<dbReference type="GO" id="GO:0036402">
    <property type="term" value="F:proteasome-activating activity"/>
    <property type="evidence" value="ECO:0007669"/>
    <property type="project" value="UniProtKB-UniRule"/>
</dbReference>
<dbReference type="GO" id="GO:0043335">
    <property type="term" value="P:protein unfolding"/>
    <property type="evidence" value="ECO:0007669"/>
    <property type="project" value="UniProtKB-UniRule"/>
</dbReference>
<dbReference type="GO" id="GO:0051603">
    <property type="term" value="P:proteolysis involved in protein catabolic process"/>
    <property type="evidence" value="ECO:0007669"/>
    <property type="project" value="TreeGrafter"/>
</dbReference>
<dbReference type="Gene3D" id="1.10.8.60">
    <property type="match status" value="1"/>
</dbReference>
<dbReference type="Gene3D" id="3.40.50.300">
    <property type="entry name" value="P-loop containing nucleotide triphosphate hydrolases"/>
    <property type="match status" value="2"/>
</dbReference>
<dbReference type="HAMAP" id="MF_00249">
    <property type="entry name" value="HslU"/>
    <property type="match status" value="1"/>
</dbReference>
<dbReference type="InterPro" id="IPR003593">
    <property type="entry name" value="AAA+_ATPase"/>
</dbReference>
<dbReference type="InterPro" id="IPR050052">
    <property type="entry name" value="ATP-dep_Clp_protease_ClpX"/>
</dbReference>
<dbReference type="InterPro" id="IPR003959">
    <property type="entry name" value="ATPase_AAA_core"/>
</dbReference>
<dbReference type="InterPro" id="IPR019489">
    <property type="entry name" value="Clp_ATPase_C"/>
</dbReference>
<dbReference type="InterPro" id="IPR004491">
    <property type="entry name" value="HslU"/>
</dbReference>
<dbReference type="InterPro" id="IPR027417">
    <property type="entry name" value="P-loop_NTPase"/>
</dbReference>
<dbReference type="NCBIfam" id="TIGR00390">
    <property type="entry name" value="hslU"/>
    <property type="match status" value="1"/>
</dbReference>
<dbReference type="NCBIfam" id="NF003544">
    <property type="entry name" value="PRK05201.1"/>
    <property type="match status" value="1"/>
</dbReference>
<dbReference type="PANTHER" id="PTHR48102">
    <property type="entry name" value="ATP-DEPENDENT CLP PROTEASE ATP-BINDING SUBUNIT CLPX-LIKE, MITOCHONDRIAL-RELATED"/>
    <property type="match status" value="1"/>
</dbReference>
<dbReference type="PANTHER" id="PTHR48102:SF3">
    <property type="entry name" value="ATP-DEPENDENT PROTEASE ATPASE SUBUNIT HSLU"/>
    <property type="match status" value="1"/>
</dbReference>
<dbReference type="Pfam" id="PF00004">
    <property type="entry name" value="AAA"/>
    <property type="match status" value="1"/>
</dbReference>
<dbReference type="Pfam" id="PF07724">
    <property type="entry name" value="AAA_2"/>
    <property type="match status" value="1"/>
</dbReference>
<dbReference type="Pfam" id="PF10431">
    <property type="entry name" value="ClpB_D2-small"/>
    <property type="match status" value="1"/>
</dbReference>
<dbReference type="SMART" id="SM00382">
    <property type="entry name" value="AAA"/>
    <property type="match status" value="1"/>
</dbReference>
<dbReference type="SMART" id="SM01086">
    <property type="entry name" value="ClpB_D2-small"/>
    <property type="match status" value="1"/>
</dbReference>
<dbReference type="SUPFAM" id="SSF52540">
    <property type="entry name" value="P-loop containing nucleoside triphosphate hydrolases"/>
    <property type="match status" value="1"/>
</dbReference>
<reference key="1">
    <citation type="journal article" date="2006" name="Proc. Natl. Acad. Sci. U.S.A.">
        <title>The complete genome sequence of Lactobacillus bulgaricus reveals extensive and ongoing reductive evolution.</title>
        <authorList>
            <person name="van de Guchte M."/>
            <person name="Penaud S."/>
            <person name="Grimaldi C."/>
            <person name="Barbe V."/>
            <person name="Bryson K."/>
            <person name="Nicolas P."/>
            <person name="Robert C."/>
            <person name="Oztas S."/>
            <person name="Mangenot S."/>
            <person name="Couloux A."/>
            <person name="Loux V."/>
            <person name="Dervyn R."/>
            <person name="Bossy R."/>
            <person name="Bolotin A."/>
            <person name="Batto J.-M."/>
            <person name="Walunas T."/>
            <person name="Gibrat J.-F."/>
            <person name="Bessieres P."/>
            <person name="Weissenbach J."/>
            <person name="Ehrlich S.D."/>
            <person name="Maguin E."/>
        </authorList>
    </citation>
    <scope>NUCLEOTIDE SEQUENCE [LARGE SCALE GENOMIC DNA]</scope>
    <source>
        <strain>ATCC 11842 / DSM 20081 / BCRC 10696 / JCM 1002 / NBRC 13953 / NCIMB 11778 / NCTC 12712 / WDCM 00102 / Lb 14</strain>
    </source>
</reference>
<name>HSLU_LACDA</name>
<gene>
    <name evidence="1" type="primary">hslU</name>
    <name type="ordered locus">Ldb1269</name>
</gene>
<proteinExistence type="inferred from homology"/>